<name>NAGS_CANAL</name>
<protein>
    <recommendedName>
        <fullName>Amino-acid acetyltransferase, mitochondrial</fullName>
        <ecNumber>2.3.1.1</ecNumber>
    </recommendedName>
    <alternativeName>
        <fullName>Arginine-requiring protein 2</fullName>
    </alternativeName>
    <alternativeName>
        <fullName>Glutamate N-acetyltransferase</fullName>
    </alternativeName>
    <alternativeName>
        <fullName>N-acetylglutamate synthase</fullName>
        <shortName>AGS</shortName>
        <shortName>NAGS</shortName>
    </alternativeName>
</protein>
<dbReference type="EC" id="2.3.1.1"/>
<dbReference type="EMBL" id="CP017623">
    <property type="protein sequence ID" value="AOW26174.1"/>
    <property type="molecule type" value="Genomic_DNA"/>
</dbReference>
<dbReference type="RefSeq" id="XP_710867.2">
    <property type="nucleotide sequence ID" value="XM_705775.2"/>
</dbReference>
<dbReference type="FunCoup" id="Q59MB6">
    <property type="interactions" value="110"/>
</dbReference>
<dbReference type="STRING" id="237561.Q59MB6"/>
<dbReference type="EnsemblFungi" id="C1_05020C_A-T">
    <property type="protein sequence ID" value="C1_05020C_A-T-p1"/>
    <property type="gene ID" value="C1_05020C_A"/>
</dbReference>
<dbReference type="GeneID" id="3647533"/>
<dbReference type="KEGG" id="cal:CAALFM_C105020CA"/>
<dbReference type="CGD" id="CAL0000184037">
    <property type="gene designation" value="ARG2"/>
</dbReference>
<dbReference type="VEuPathDB" id="FungiDB:C1_05020C_A"/>
<dbReference type="eggNOG" id="KOG2436">
    <property type="taxonomic scope" value="Eukaryota"/>
</dbReference>
<dbReference type="HOGENOM" id="CLU_013088_0_0_1"/>
<dbReference type="InParanoid" id="Q59MB6"/>
<dbReference type="OrthoDB" id="5585968at2759"/>
<dbReference type="UniPathway" id="UPA00068">
    <property type="reaction ID" value="UER00106"/>
</dbReference>
<dbReference type="PRO" id="PR:Q59MB6"/>
<dbReference type="Proteomes" id="UP000000559">
    <property type="component" value="Chromosome 1"/>
</dbReference>
<dbReference type="GO" id="GO:0005759">
    <property type="term" value="C:mitochondrial matrix"/>
    <property type="evidence" value="ECO:0000318"/>
    <property type="project" value="GO_Central"/>
</dbReference>
<dbReference type="GO" id="GO:0004042">
    <property type="term" value="F:L-glutamate N-acetyltransferase activity"/>
    <property type="evidence" value="ECO:0000318"/>
    <property type="project" value="GO_Central"/>
</dbReference>
<dbReference type="GO" id="GO:0006526">
    <property type="term" value="P:L-arginine biosynthetic process"/>
    <property type="evidence" value="ECO:0000318"/>
    <property type="project" value="GO_Central"/>
</dbReference>
<dbReference type="GO" id="GO:0006592">
    <property type="term" value="P:ornithine biosynthetic process"/>
    <property type="evidence" value="ECO:0000318"/>
    <property type="project" value="GO_Central"/>
</dbReference>
<dbReference type="Gene3D" id="3.40.630.30">
    <property type="match status" value="1"/>
</dbReference>
<dbReference type="InterPro" id="IPR011190">
    <property type="entry name" value="GlcNAc_Synth_fun"/>
</dbReference>
<dbReference type="InterPro" id="IPR006855">
    <property type="entry name" value="Vertebrate-like_GNAT_dom"/>
</dbReference>
<dbReference type="PANTHER" id="PTHR23342:SF4">
    <property type="entry name" value="AMINO-ACID ACETYLTRANSFERASE, MITOCHONDRIAL"/>
    <property type="match status" value="1"/>
</dbReference>
<dbReference type="PANTHER" id="PTHR23342">
    <property type="entry name" value="N-ACETYLGLUTAMATE SYNTHASE"/>
    <property type="match status" value="1"/>
</dbReference>
<dbReference type="Pfam" id="PF04768">
    <property type="entry name" value="NAT"/>
    <property type="match status" value="1"/>
</dbReference>
<dbReference type="PIRSF" id="PIRSF007892">
    <property type="entry name" value="NAGS_fungal"/>
    <property type="match status" value="1"/>
</dbReference>
<dbReference type="PROSITE" id="PS51731">
    <property type="entry name" value="GNAT_NAGS"/>
    <property type="match status" value="1"/>
</dbReference>
<accession>Q59MB6</accession>
<accession>A0A1D8PDG4</accession>
<accession>Q59MA4</accession>
<sequence>MSKLKTLNRQFISNLETHKVTTDAKRNLILSILKSTTTKREAKNYLTKYQNQFDFNDDLDFNKSIKIKNEQSSLTNRDSQRELFINRFLNQSNPFINVYDKEDVKLQKVPLRLAIFKIKFTKITIKQWKGIAETFKRLITLGISPIIMLDYDHLPSDSYKNNELYMINQGNKMLNYLGHPEEESDLKVTLLRSLFTSHKGVPTLDSLESILIPLYQGIIPIIQPIVYNADLSKQEFLASDKLLLGLSSALIEKRTTDLLSIEKIVMIDPIGGIPSIERHQTSHVFINLSQEYSDILSELFIGHIEPKYRDTHVDNLNTMNNVLSYINEKSGNDETTGIITTPEIMSINIDQLNPIIYNVLTDRAIISSSLPSTTNRTPHLSTTIIKKGVEVQIFDVDNYDKDLTMQNLFDDKLVNKEKLIDLLNDSFGKSLDVGPYLDRINKNIATVVIVGDYDGAAIITWEYSKGEKIAYLDKFAIAKKNQGLPGLADVIFKIILQSHPFELIWRSRKNNPVNKWYFERCCGCMSAPDSQWKIFYTGEVFDKKIDRFKRKLRHQNGVVDIDRKLQQYSEICEGITPSFK</sequence>
<evidence type="ECO:0000250" key="1"/>
<evidence type="ECO:0000255" key="2"/>
<evidence type="ECO:0000255" key="3">
    <source>
        <dbReference type="PROSITE-ProRule" id="PRU00532"/>
    </source>
</evidence>
<evidence type="ECO:0000269" key="4">
    <source>
    </source>
</evidence>
<evidence type="ECO:0000305" key="5"/>
<feature type="transit peptide" description="Mitochondrion" evidence="2">
    <location>
        <begin position="1"/>
        <end status="unknown"/>
    </location>
</feature>
<feature type="chain" id="PRO_0000372556" description="Amino-acid acetyltransferase, mitochondrial">
    <location>
        <begin status="unknown"/>
        <end position="580"/>
    </location>
</feature>
<feature type="domain" description="N-acetyltransferase" evidence="3">
    <location>
        <begin position="403"/>
        <end position="560"/>
    </location>
</feature>
<comment type="function">
    <text evidence="1">N-acetylglutamate synthase involved in arginine biosynthesis.</text>
</comment>
<comment type="catalytic activity">
    <reaction>
        <text>L-glutamate + acetyl-CoA = N-acetyl-L-glutamate + CoA + H(+)</text>
        <dbReference type="Rhea" id="RHEA:24292"/>
        <dbReference type="ChEBI" id="CHEBI:15378"/>
        <dbReference type="ChEBI" id="CHEBI:29985"/>
        <dbReference type="ChEBI" id="CHEBI:44337"/>
        <dbReference type="ChEBI" id="CHEBI:57287"/>
        <dbReference type="ChEBI" id="CHEBI:57288"/>
        <dbReference type="EC" id="2.3.1.1"/>
    </reaction>
</comment>
<comment type="pathway">
    <text>Amino-acid biosynthesis; L-arginine biosynthesis; N(2)-acetyl-L-ornithine from L-glutamate: step 1/4.</text>
</comment>
<comment type="subcellular location">
    <subcellularLocation>
        <location evidence="1">Mitochondrion</location>
    </subcellularLocation>
</comment>
<comment type="induction">
    <text evidence="4">Up-regulated in cells treated with farnesol and grown at high cell density in N-acetyl-D-glucosamine medium. Expression is regulated by the general amino acid control response transcription factor GCN4.</text>
</comment>
<comment type="similarity">
    <text evidence="5">Belongs to the acetyltransferase family.</text>
</comment>
<gene>
    <name type="primary">ARG2</name>
    <name type="ordered locus">CAALFM_C105020CA</name>
    <name type="ORF">CaO19.56</name>
    <name type="ORF">CaO19.7717</name>
</gene>
<reference key="1">
    <citation type="journal article" date="2004" name="Proc. Natl. Acad. Sci. U.S.A.">
        <title>The diploid genome sequence of Candida albicans.</title>
        <authorList>
            <person name="Jones T."/>
            <person name="Federspiel N.A."/>
            <person name="Chibana H."/>
            <person name="Dungan J."/>
            <person name="Kalman S."/>
            <person name="Magee B.B."/>
            <person name="Newport G."/>
            <person name="Thorstenson Y.R."/>
            <person name="Agabian N."/>
            <person name="Magee P.T."/>
            <person name="Davis R.W."/>
            <person name="Scherer S."/>
        </authorList>
    </citation>
    <scope>NUCLEOTIDE SEQUENCE [LARGE SCALE GENOMIC DNA]</scope>
    <source>
        <strain>SC5314 / ATCC MYA-2876</strain>
    </source>
</reference>
<reference key="2">
    <citation type="journal article" date="2007" name="Genome Biol.">
        <title>Assembly of the Candida albicans genome into sixteen supercontigs aligned on the eight chromosomes.</title>
        <authorList>
            <person name="van het Hoog M."/>
            <person name="Rast T.J."/>
            <person name="Martchenko M."/>
            <person name="Grindle S."/>
            <person name="Dignard D."/>
            <person name="Hogues H."/>
            <person name="Cuomo C."/>
            <person name="Berriman M."/>
            <person name="Scherer S."/>
            <person name="Magee B.B."/>
            <person name="Whiteway M."/>
            <person name="Chibana H."/>
            <person name="Nantel A."/>
            <person name="Magee P.T."/>
        </authorList>
    </citation>
    <scope>GENOME REANNOTATION</scope>
    <source>
        <strain>SC5314 / ATCC MYA-2876</strain>
    </source>
</reference>
<reference key="3">
    <citation type="journal article" date="2013" name="Genome Biol.">
        <title>Assembly of a phased diploid Candida albicans genome facilitates allele-specific measurements and provides a simple model for repeat and indel structure.</title>
        <authorList>
            <person name="Muzzey D."/>
            <person name="Schwartz K."/>
            <person name="Weissman J.S."/>
            <person name="Sherlock G."/>
        </authorList>
    </citation>
    <scope>NUCLEOTIDE SEQUENCE [LARGE SCALE GENOMIC DNA]</scope>
    <scope>GENOME REANNOTATION</scope>
    <source>
        <strain>SC5314 / ATCC MYA-2876</strain>
    </source>
</reference>
<reference key="4">
    <citation type="journal article" date="2007" name="Nippon Ishinkin Gakkai Zasshi">
        <title>Transcriptional changes in Candida albicans Genes by both farnesol and high cell density at an early stage of morphogenesis in N-acetyl-D-glucosamine medium.</title>
        <authorList>
            <person name="Cho T."/>
            <person name="Aoyama T."/>
            <person name="Toyoda M."/>
            <person name="Nakayama H."/>
            <person name="Chibana H."/>
            <person name="Kaminishi H."/>
        </authorList>
    </citation>
    <scope>INDUCTION</scope>
</reference>
<keyword id="KW-0012">Acyltransferase</keyword>
<keyword id="KW-0028">Amino-acid biosynthesis</keyword>
<keyword id="KW-0496">Mitochondrion</keyword>
<keyword id="KW-1185">Reference proteome</keyword>
<keyword id="KW-0808">Transferase</keyword>
<keyword id="KW-0809">Transit peptide</keyword>
<proteinExistence type="evidence at transcript level"/>
<organism>
    <name type="scientific">Candida albicans (strain SC5314 / ATCC MYA-2876)</name>
    <name type="common">Yeast</name>
    <dbReference type="NCBI Taxonomy" id="237561"/>
    <lineage>
        <taxon>Eukaryota</taxon>
        <taxon>Fungi</taxon>
        <taxon>Dikarya</taxon>
        <taxon>Ascomycota</taxon>
        <taxon>Saccharomycotina</taxon>
        <taxon>Pichiomycetes</taxon>
        <taxon>Debaryomycetaceae</taxon>
        <taxon>Candida/Lodderomyces clade</taxon>
        <taxon>Candida</taxon>
    </lineage>
</organism>